<reference key="1">
    <citation type="submission" date="2009-04" db="EMBL/GenBank/DDBJ databases">
        <title>Genome sequence of Bacillus anthracis A0248.</title>
        <authorList>
            <person name="Dodson R.J."/>
            <person name="Munk A.C."/>
            <person name="Bruce D."/>
            <person name="Detter C."/>
            <person name="Tapia R."/>
            <person name="Sutton G."/>
            <person name="Sims D."/>
            <person name="Brettin T."/>
        </authorList>
    </citation>
    <scope>NUCLEOTIDE SEQUENCE [LARGE SCALE GENOMIC DNA]</scope>
    <source>
        <strain>A0248</strain>
    </source>
</reference>
<accession>C3P9E9</accession>
<dbReference type="EC" id="2.5.1.61" evidence="1"/>
<dbReference type="EMBL" id="CP001598">
    <property type="protein sequence ID" value="ACQ47902.1"/>
    <property type="molecule type" value="Genomic_DNA"/>
</dbReference>
<dbReference type="RefSeq" id="WP_001226429.1">
    <property type="nucleotide sequence ID" value="NC_012659.1"/>
</dbReference>
<dbReference type="SMR" id="C3P9E9"/>
<dbReference type="GeneID" id="45024336"/>
<dbReference type="KEGG" id="bai:BAA_4714"/>
<dbReference type="HOGENOM" id="CLU_019704_0_2_9"/>
<dbReference type="UniPathway" id="UPA00251">
    <property type="reaction ID" value="UER00319"/>
</dbReference>
<dbReference type="GO" id="GO:0005737">
    <property type="term" value="C:cytoplasm"/>
    <property type="evidence" value="ECO:0007669"/>
    <property type="project" value="TreeGrafter"/>
</dbReference>
<dbReference type="GO" id="GO:0004418">
    <property type="term" value="F:hydroxymethylbilane synthase activity"/>
    <property type="evidence" value="ECO:0007669"/>
    <property type="project" value="UniProtKB-UniRule"/>
</dbReference>
<dbReference type="GO" id="GO:0006782">
    <property type="term" value="P:protoporphyrinogen IX biosynthetic process"/>
    <property type="evidence" value="ECO:0007669"/>
    <property type="project" value="UniProtKB-UniRule"/>
</dbReference>
<dbReference type="CDD" id="cd13646">
    <property type="entry name" value="PBP2_EcHMBS_like"/>
    <property type="match status" value="1"/>
</dbReference>
<dbReference type="FunFam" id="3.30.160.40:FF:000001">
    <property type="entry name" value="Porphobilinogen deaminase"/>
    <property type="match status" value="1"/>
</dbReference>
<dbReference type="FunFam" id="3.40.190.10:FF:000004">
    <property type="entry name" value="Porphobilinogen deaminase"/>
    <property type="match status" value="1"/>
</dbReference>
<dbReference type="FunFam" id="3.40.190.10:FF:000005">
    <property type="entry name" value="Porphobilinogen deaminase"/>
    <property type="match status" value="1"/>
</dbReference>
<dbReference type="Gene3D" id="3.40.190.10">
    <property type="entry name" value="Periplasmic binding protein-like II"/>
    <property type="match status" value="2"/>
</dbReference>
<dbReference type="Gene3D" id="3.30.160.40">
    <property type="entry name" value="Porphobilinogen deaminase, C-terminal domain"/>
    <property type="match status" value="1"/>
</dbReference>
<dbReference type="HAMAP" id="MF_00260">
    <property type="entry name" value="Porphobil_deam"/>
    <property type="match status" value="1"/>
</dbReference>
<dbReference type="InterPro" id="IPR000860">
    <property type="entry name" value="HemC"/>
</dbReference>
<dbReference type="InterPro" id="IPR022419">
    <property type="entry name" value="Porphobilin_deaminase_cofac_BS"/>
</dbReference>
<dbReference type="InterPro" id="IPR022417">
    <property type="entry name" value="Porphobilin_deaminase_N"/>
</dbReference>
<dbReference type="InterPro" id="IPR022418">
    <property type="entry name" value="Porphobilinogen_deaminase_C"/>
</dbReference>
<dbReference type="InterPro" id="IPR036803">
    <property type="entry name" value="Porphobilinogen_deaminase_C_sf"/>
</dbReference>
<dbReference type="NCBIfam" id="TIGR00212">
    <property type="entry name" value="hemC"/>
    <property type="match status" value="1"/>
</dbReference>
<dbReference type="PANTHER" id="PTHR11557">
    <property type="entry name" value="PORPHOBILINOGEN DEAMINASE"/>
    <property type="match status" value="1"/>
</dbReference>
<dbReference type="PANTHER" id="PTHR11557:SF0">
    <property type="entry name" value="PORPHOBILINOGEN DEAMINASE"/>
    <property type="match status" value="1"/>
</dbReference>
<dbReference type="Pfam" id="PF01379">
    <property type="entry name" value="Porphobil_deam"/>
    <property type="match status" value="1"/>
</dbReference>
<dbReference type="Pfam" id="PF03900">
    <property type="entry name" value="Porphobil_deamC"/>
    <property type="match status" value="1"/>
</dbReference>
<dbReference type="PIRSF" id="PIRSF001438">
    <property type="entry name" value="4pyrrol_synth_OHMeBilane_synth"/>
    <property type="match status" value="1"/>
</dbReference>
<dbReference type="PRINTS" id="PR00151">
    <property type="entry name" value="PORPHBDMNASE"/>
</dbReference>
<dbReference type="SUPFAM" id="SSF53850">
    <property type="entry name" value="Periplasmic binding protein-like II"/>
    <property type="match status" value="1"/>
</dbReference>
<dbReference type="SUPFAM" id="SSF54782">
    <property type="entry name" value="Porphobilinogen deaminase (hydroxymethylbilane synthase), C-terminal domain"/>
    <property type="match status" value="1"/>
</dbReference>
<dbReference type="PROSITE" id="PS00533">
    <property type="entry name" value="PORPHOBILINOGEN_DEAM"/>
    <property type="match status" value="1"/>
</dbReference>
<keyword id="KW-0627">Porphyrin biosynthesis</keyword>
<keyword id="KW-0808">Transferase</keyword>
<gene>
    <name evidence="1" type="primary">hemC</name>
    <name type="ordered locus">BAA_4714</name>
</gene>
<proteinExistence type="inferred from homology"/>
<evidence type="ECO:0000255" key="1">
    <source>
        <dbReference type="HAMAP-Rule" id="MF_00260"/>
    </source>
</evidence>
<organism>
    <name type="scientific">Bacillus anthracis (strain A0248)</name>
    <dbReference type="NCBI Taxonomy" id="592021"/>
    <lineage>
        <taxon>Bacteria</taxon>
        <taxon>Bacillati</taxon>
        <taxon>Bacillota</taxon>
        <taxon>Bacilli</taxon>
        <taxon>Bacillales</taxon>
        <taxon>Bacillaceae</taxon>
        <taxon>Bacillus</taxon>
        <taxon>Bacillus cereus group</taxon>
    </lineage>
</organism>
<sequence length="309" mass="33663">MRKIIVGSRKSKLALTQTNWFIDQLKALGLPYEFEVKEIVTKGDVILDVTLSKVGGKGLFVKEIEHALLTKEIDMAVHSMKDMPAVLPEGLMIGCTPKRVDPRDAFISKSGASYKELAEGAILGTSSLRRSAQLLAARPDLQVKWIRGNIDTRLRKLKEEDYDAIILATAGLQRMGWDNEVITEHLDETLCVPAVGQGALAIECREDDKDLLQLLAHINDAVTEKTVAAERVFLHKLEGGCQVPIAGYATITENDAIELTALVGSMDGSVLLKETVVGTDPEKVGLEAADRLIKQGAKELILAANKGQQ</sequence>
<feature type="chain" id="PRO_1000125651" description="Porphobilinogen deaminase">
    <location>
        <begin position="1"/>
        <end position="309"/>
    </location>
</feature>
<feature type="modified residue" description="S-(dipyrrolylmethanemethyl)cysteine" evidence="1">
    <location>
        <position position="241"/>
    </location>
</feature>
<name>HEM3_BACAA</name>
<comment type="function">
    <text evidence="1">Tetrapolymerization of the monopyrrole PBG into the hydroxymethylbilane pre-uroporphyrinogen in several discrete steps.</text>
</comment>
<comment type="catalytic activity">
    <reaction evidence="1">
        <text>4 porphobilinogen + H2O = hydroxymethylbilane + 4 NH4(+)</text>
        <dbReference type="Rhea" id="RHEA:13185"/>
        <dbReference type="ChEBI" id="CHEBI:15377"/>
        <dbReference type="ChEBI" id="CHEBI:28938"/>
        <dbReference type="ChEBI" id="CHEBI:57845"/>
        <dbReference type="ChEBI" id="CHEBI:58126"/>
        <dbReference type="EC" id="2.5.1.61"/>
    </reaction>
</comment>
<comment type="cofactor">
    <cofactor evidence="1">
        <name>dipyrromethane</name>
        <dbReference type="ChEBI" id="CHEBI:60342"/>
    </cofactor>
    <text evidence="1">Binds 1 dipyrromethane group covalently.</text>
</comment>
<comment type="pathway">
    <text evidence="1">Porphyrin-containing compound metabolism; protoporphyrin-IX biosynthesis; coproporphyrinogen-III from 5-aminolevulinate: step 2/4.</text>
</comment>
<comment type="subunit">
    <text evidence="1">Monomer.</text>
</comment>
<comment type="miscellaneous">
    <text evidence="1">The porphobilinogen subunits are added to the dipyrromethane group.</text>
</comment>
<comment type="similarity">
    <text evidence="1">Belongs to the HMBS family.</text>
</comment>
<protein>
    <recommendedName>
        <fullName evidence="1">Porphobilinogen deaminase</fullName>
        <shortName evidence="1">PBG</shortName>
        <ecNumber evidence="1">2.5.1.61</ecNumber>
    </recommendedName>
    <alternativeName>
        <fullName evidence="1">Hydroxymethylbilane synthase</fullName>
        <shortName evidence="1">HMBS</shortName>
    </alternativeName>
    <alternativeName>
        <fullName evidence="1">Pre-uroporphyrinogen synthase</fullName>
    </alternativeName>
</protein>